<comment type="function">
    <text evidence="1">H(+)-stimulated, divalent metal cation uptake system.</text>
</comment>
<comment type="subcellular location">
    <subcellularLocation>
        <location evidence="1">Cell inner membrane</location>
        <topology evidence="1">Multi-pass membrane protein</topology>
    </subcellularLocation>
</comment>
<comment type="similarity">
    <text evidence="1">Belongs to the NRAMP family.</text>
</comment>
<comment type="sequence caution" evidence="2">
    <conflict type="erroneous initiation">
        <sequence resource="EMBL-CDS" id="ABK37452"/>
    </conflict>
    <text>Extended N-terminus.</text>
</comment>
<organism>
    <name type="scientific">Aeromonas hydrophila subsp. hydrophila (strain ATCC 7966 / DSM 30187 / BCRC 13018 / CCUG 14551 / JCM 1027 / KCTC 2358 / NCIMB 9240 / NCTC 8049)</name>
    <dbReference type="NCBI Taxonomy" id="380703"/>
    <lineage>
        <taxon>Bacteria</taxon>
        <taxon>Pseudomonadati</taxon>
        <taxon>Pseudomonadota</taxon>
        <taxon>Gammaproteobacteria</taxon>
        <taxon>Aeromonadales</taxon>
        <taxon>Aeromonadaceae</taxon>
        <taxon>Aeromonas</taxon>
    </lineage>
</organism>
<sequence length="407" mass="43101">MQPALTTAIPARKFKLTLLGPAFIAAIGYIDPGNFATNIQAGSTFGYQLLWVVVWANLMAMLVQTLSAKLGIVTGKNLAEHIRDRLPKPAVWAYWVQAEIIAMATDLAEFIGAAVGFKLLLGVTLLEGAGITAVVTWGILMLQSRGQKPLEFVVGGLLLFVAAAYIVELVFSRPHLPSLLEGALFPGLPNSDAVYLAAGVLGATVMPHVIYLHSALTQHTQDQGSVPQRLHTTRVDVAIAMTIAGFVNLAMMAMAAAAFHSSGNQQVAELESAYQTLTPLLGQAAATLFGLSLVASGISSTVVGTLAGQVVMQGFVRFTIPLWLRRAITMAPAFVVIAMGLNTTEILVLSQVVLSFGIALALIPLLILTGDRALMGEYRNHPVTQAVGRLIVALVIGLNAYLLVAMI</sequence>
<protein>
    <recommendedName>
        <fullName evidence="1">Divalent metal cation transporter MntH</fullName>
    </recommendedName>
</protein>
<proteinExistence type="inferred from homology"/>
<keyword id="KW-0997">Cell inner membrane</keyword>
<keyword id="KW-1003">Cell membrane</keyword>
<keyword id="KW-0406">Ion transport</keyword>
<keyword id="KW-0472">Membrane</keyword>
<keyword id="KW-1185">Reference proteome</keyword>
<keyword id="KW-0769">Symport</keyword>
<keyword id="KW-0812">Transmembrane</keyword>
<keyword id="KW-1133">Transmembrane helix</keyword>
<keyword id="KW-0813">Transport</keyword>
<reference key="1">
    <citation type="journal article" date="2006" name="J. Bacteriol.">
        <title>Genome sequence of Aeromonas hydrophila ATCC 7966T: jack of all trades.</title>
        <authorList>
            <person name="Seshadri R."/>
            <person name="Joseph S.W."/>
            <person name="Chopra A.K."/>
            <person name="Sha J."/>
            <person name="Shaw J."/>
            <person name="Graf J."/>
            <person name="Haft D.H."/>
            <person name="Wu M."/>
            <person name="Ren Q."/>
            <person name="Rosovitz M.J."/>
            <person name="Madupu R."/>
            <person name="Tallon L."/>
            <person name="Kim M."/>
            <person name="Jin S."/>
            <person name="Vuong H."/>
            <person name="Stine O.C."/>
            <person name="Ali A."/>
            <person name="Horneman A.J."/>
            <person name="Heidelberg J.F."/>
        </authorList>
    </citation>
    <scope>NUCLEOTIDE SEQUENCE [LARGE SCALE GENOMIC DNA]</scope>
    <source>
        <strain>ATCC 7966 / DSM 30187 / BCRC 13018 / CCUG 14551 / JCM 1027 / KCTC 2358 / NCIMB 9240 / NCTC 8049</strain>
    </source>
</reference>
<dbReference type="EMBL" id="CP000462">
    <property type="protein sequence ID" value="ABK37452.1"/>
    <property type="status" value="ALT_INIT"/>
    <property type="molecule type" value="Genomic_DNA"/>
</dbReference>
<dbReference type="RefSeq" id="WP_016349448.1">
    <property type="nucleotide sequence ID" value="NC_008570.1"/>
</dbReference>
<dbReference type="RefSeq" id="YP_855251.1">
    <property type="nucleotide sequence ID" value="NC_008570.1"/>
</dbReference>
<dbReference type="SMR" id="A0KG66"/>
<dbReference type="STRING" id="380703.AHA_0709"/>
<dbReference type="EnsemblBacteria" id="ABK37452">
    <property type="protein sequence ID" value="ABK37452"/>
    <property type="gene ID" value="AHA_0709"/>
</dbReference>
<dbReference type="GeneID" id="4488331"/>
<dbReference type="KEGG" id="aha:AHA_0709"/>
<dbReference type="PATRIC" id="fig|380703.7.peg.711"/>
<dbReference type="eggNOG" id="COG1914">
    <property type="taxonomic scope" value="Bacteria"/>
</dbReference>
<dbReference type="HOGENOM" id="CLU_020088_2_0_6"/>
<dbReference type="OrthoDB" id="9787548at2"/>
<dbReference type="Proteomes" id="UP000000756">
    <property type="component" value="Chromosome"/>
</dbReference>
<dbReference type="GO" id="GO:0005886">
    <property type="term" value="C:plasma membrane"/>
    <property type="evidence" value="ECO:0007669"/>
    <property type="project" value="UniProtKB-SubCell"/>
</dbReference>
<dbReference type="GO" id="GO:0015086">
    <property type="term" value="F:cadmium ion transmembrane transporter activity"/>
    <property type="evidence" value="ECO:0007669"/>
    <property type="project" value="TreeGrafter"/>
</dbReference>
<dbReference type="GO" id="GO:0005384">
    <property type="term" value="F:manganese ion transmembrane transporter activity"/>
    <property type="evidence" value="ECO:0007669"/>
    <property type="project" value="TreeGrafter"/>
</dbReference>
<dbReference type="GO" id="GO:0046872">
    <property type="term" value="F:metal ion binding"/>
    <property type="evidence" value="ECO:0007669"/>
    <property type="project" value="UniProtKB-UniRule"/>
</dbReference>
<dbReference type="GO" id="GO:0015293">
    <property type="term" value="F:symporter activity"/>
    <property type="evidence" value="ECO:0007669"/>
    <property type="project" value="UniProtKB-UniRule"/>
</dbReference>
<dbReference type="GO" id="GO:0034755">
    <property type="term" value="P:iron ion transmembrane transport"/>
    <property type="evidence" value="ECO:0007669"/>
    <property type="project" value="TreeGrafter"/>
</dbReference>
<dbReference type="HAMAP" id="MF_00221">
    <property type="entry name" value="NRAMP"/>
    <property type="match status" value="1"/>
</dbReference>
<dbReference type="InterPro" id="IPR001046">
    <property type="entry name" value="NRAMP_fam"/>
</dbReference>
<dbReference type="NCBIfam" id="TIGR01197">
    <property type="entry name" value="nramp"/>
    <property type="match status" value="1"/>
</dbReference>
<dbReference type="NCBIfam" id="NF037982">
    <property type="entry name" value="Nramp_1"/>
    <property type="match status" value="1"/>
</dbReference>
<dbReference type="NCBIfam" id="NF001923">
    <property type="entry name" value="PRK00701.1"/>
    <property type="match status" value="1"/>
</dbReference>
<dbReference type="PANTHER" id="PTHR11706:SF33">
    <property type="entry name" value="NATURAL RESISTANCE-ASSOCIATED MACROPHAGE PROTEIN 2"/>
    <property type="match status" value="1"/>
</dbReference>
<dbReference type="PANTHER" id="PTHR11706">
    <property type="entry name" value="SOLUTE CARRIER PROTEIN FAMILY 11 MEMBER"/>
    <property type="match status" value="1"/>
</dbReference>
<dbReference type="Pfam" id="PF01566">
    <property type="entry name" value="Nramp"/>
    <property type="match status" value="1"/>
</dbReference>
<dbReference type="PRINTS" id="PR00447">
    <property type="entry name" value="NATRESASSCMP"/>
</dbReference>
<accession>A0KG66</accession>
<evidence type="ECO:0000255" key="1">
    <source>
        <dbReference type="HAMAP-Rule" id="MF_00221"/>
    </source>
</evidence>
<evidence type="ECO:0000305" key="2"/>
<gene>
    <name evidence="1" type="primary">mntH</name>
    <name type="ordered locus">AHA_0709</name>
</gene>
<name>MNTH_AERHH</name>
<feature type="chain" id="PRO_0000325600" description="Divalent metal cation transporter MntH">
    <location>
        <begin position="1"/>
        <end position="407"/>
    </location>
</feature>
<feature type="transmembrane region" description="Helical" evidence="1">
    <location>
        <begin position="16"/>
        <end position="36"/>
    </location>
</feature>
<feature type="transmembrane region" description="Helical" evidence="1">
    <location>
        <begin position="43"/>
        <end position="63"/>
    </location>
</feature>
<feature type="transmembrane region" description="Helical" evidence="1">
    <location>
        <begin position="95"/>
        <end position="115"/>
    </location>
</feature>
<feature type="transmembrane region" description="Helical" evidence="1">
    <location>
        <begin position="119"/>
        <end position="139"/>
    </location>
</feature>
<feature type="transmembrane region" description="Helical" evidence="1">
    <location>
        <begin position="152"/>
        <end position="172"/>
    </location>
</feature>
<feature type="transmembrane region" description="Helical" evidence="1">
    <location>
        <begin position="193"/>
        <end position="213"/>
    </location>
</feature>
<feature type="transmembrane region" description="Helical" evidence="1">
    <location>
        <begin position="239"/>
        <end position="259"/>
    </location>
</feature>
<feature type="transmembrane region" description="Helical" evidence="1">
    <location>
        <begin position="288"/>
        <end position="308"/>
    </location>
</feature>
<feature type="transmembrane region" description="Helical" evidence="1">
    <location>
        <begin position="318"/>
        <end position="338"/>
    </location>
</feature>
<feature type="transmembrane region" description="Helical" evidence="1">
    <location>
        <begin position="346"/>
        <end position="366"/>
    </location>
</feature>
<feature type="transmembrane region" description="Helical" evidence="1">
    <location>
        <begin position="387"/>
        <end position="407"/>
    </location>
</feature>